<proteinExistence type="evidence at transcript level"/>
<evidence type="ECO:0000269" key="1">
    <source>
    </source>
</evidence>
<evidence type="ECO:0000269" key="2">
    <source>
    </source>
</evidence>
<sequence length="268" mass="29379">MEIDSKITNFEDAGTINLNLHNFVSEKFANKPKVLNVASLASNSVDEAGDSEQKVSFRINQTGNIFYSTTTPELTLESKKLFNSVTVLFAAMTKALGEKGLNLFNYEAVASLIQKSGYFVEVQKFQKNLSIKSGSLSIDTQIIQQLIPGLTSGASLDIAKGVLGALNGEFSASSSDEKVKIAHLLFICEELFGAPSVTVRLFYATKETHKTLTSSPCHKSSSVSFELNQEASTFLFVSPDTIAEFSQKFETQPEEYKNLIEKLKGYLP</sequence>
<dbReference type="EMBL" id="AB006956">
    <property type="protein sequence ID" value="BAC87708.1"/>
    <property type="molecule type" value="mRNA"/>
</dbReference>
<dbReference type="SMR" id="Q76N59"/>
<accession>Q76N59</accession>
<reference key="1">
    <citation type="journal article" date="2002" name="J. Muscle Res. Cell Motil.">
        <title>Involvement of a novel gene, zyg1, in zygote formation of Dictyostelium mucoroides.</title>
        <authorList>
            <person name="Amagai A."/>
        </authorList>
    </citation>
    <scope>NUCLEOTIDE SEQUENCE [MRNA]</scope>
    <scope>FUNCTION</scope>
</reference>
<reference key="2">
    <citation type="journal article" date="2007" name="Exp. Cell Res.">
        <title>Ethylene induces zygote formation through an enhanced expression of zyg1 in Dictyostelium mucoroides.</title>
        <authorList>
            <person name="Amagai A."/>
            <person name="Soramoto S."/>
            <person name="Saito S."/>
            <person name="Maeda Y."/>
        </authorList>
    </citation>
    <scope>INDUCTION</scope>
    <scope>DEVELOPMENTAL STAGE</scope>
</reference>
<gene>
    <name type="primary">zyg1</name>
</gene>
<organism>
    <name type="scientific">Dictyostelium mucoroides</name>
    <name type="common">Slime mold</name>
    <dbReference type="NCBI Taxonomy" id="31287"/>
    <lineage>
        <taxon>Eukaryota</taxon>
        <taxon>Amoebozoa</taxon>
        <taxon>Evosea</taxon>
        <taxon>Eumycetozoa</taxon>
        <taxon>Dictyostelia</taxon>
        <taxon>Dictyosteliales</taxon>
        <taxon>Dictyosteliaceae</taxon>
        <taxon>Dictyostelium</taxon>
    </lineage>
</organism>
<protein>
    <recommendedName>
        <fullName>Zygote formation protein zyg1</fullName>
    </recommendedName>
</protein>
<name>ZYG1_DICMU</name>
<feature type="chain" id="PRO_0000390406" description="Zygote formation protein zyg1">
    <location>
        <begin position="1"/>
        <end position="268"/>
    </location>
</feature>
<keyword id="KW-0217">Developmental protein</keyword>
<comment type="function">
    <text evidence="1">Plays an essential role in zygote formation by inducing sexual cell fusion. Overexpressing cells eventually formed many loose mounds, in which giant multinucleate cells were surrounded by normal-sized cells.</text>
</comment>
<comment type="developmental stage">
    <text evidence="2">Expression lasts until zygotes are formed.</text>
</comment>
<comment type="induction">
    <text evidence="2">Expression augmented in cells that overproduce ethylene but significantly suppressed in cells that have lower ethylene production.</text>
</comment>